<comment type="catalytic activity">
    <reaction evidence="1">
        <text>D-arabinose 5-phosphate + phosphoenolpyruvate + H2O = 3-deoxy-alpha-D-manno-2-octulosonate-8-phosphate + phosphate</text>
        <dbReference type="Rhea" id="RHEA:14053"/>
        <dbReference type="ChEBI" id="CHEBI:15377"/>
        <dbReference type="ChEBI" id="CHEBI:43474"/>
        <dbReference type="ChEBI" id="CHEBI:57693"/>
        <dbReference type="ChEBI" id="CHEBI:58702"/>
        <dbReference type="ChEBI" id="CHEBI:85985"/>
        <dbReference type="EC" id="2.5.1.55"/>
    </reaction>
</comment>
<comment type="pathway">
    <text evidence="1">Carbohydrate biosynthesis; 3-deoxy-D-manno-octulosonate biosynthesis; 3-deoxy-D-manno-octulosonate from D-ribulose 5-phosphate: step 2/3.</text>
</comment>
<comment type="pathway">
    <text evidence="1">Bacterial outer membrane biogenesis; lipopolysaccharide biosynthesis.</text>
</comment>
<comment type="subcellular location">
    <subcellularLocation>
        <location evidence="1">Cytoplasm</location>
    </subcellularLocation>
</comment>
<comment type="similarity">
    <text evidence="1">Belongs to the KdsA family.</text>
</comment>
<accession>P61654</accession>
<name>KDSA_NITV2</name>
<protein>
    <recommendedName>
        <fullName evidence="1">2-dehydro-3-deoxyphosphooctonate aldolase</fullName>
        <ecNumber evidence="1">2.5.1.55</ecNumber>
    </recommendedName>
    <alternativeName>
        <fullName evidence="1">3-deoxy-D-manno-octulosonic acid 8-phosphate synthase</fullName>
    </alternativeName>
    <alternativeName>
        <fullName evidence="1">KDO-8-phosphate synthase</fullName>
        <shortName evidence="1">KDO 8-P synthase</shortName>
        <shortName evidence="1">KDOPS</shortName>
    </alternativeName>
    <alternativeName>
        <fullName evidence="1">Phospho-2-dehydro-3-deoxyoctonate aldolase</fullName>
    </alternativeName>
</protein>
<reference key="1">
    <citation type="journal article" date="2004" name="Nat. Biotechnol.">
        <title>The genome sequence of the anaerobic, sulfate-reducing bacterium Desulfovibrio vulgaris Hildenborough.</title>
        <authorList>
            <person name="Heidelberg J.F."/>
            <person name="Seshadri R."/>
            <person name="Haveman S.A."/>
            <person name="Hemme C.L."/>
            <person name="Paulsen I.T."/>
            <person name="Kolonay J.F."/>
            <person name="Eisen J.A."/>
            <person name="Ward N.L."/>
            <person name="Methe B.A."/>
            <person name="Brinkac L.M."/>
            <person name="Daugherty S.C."/>
            <person name="DeBoy R.T."/>
            <person name="Dodson R.J."/>
            <person name="Durkin A.S."/>
            <person name="Madupu R."/>
            <person name="Nelson W.C."/>
            <person name="Sullivan S.A."/>
            <person name="Fouts D.E."/>
            <person name="Haft D.H."/>
            <person name="Selengut J."/>
            <person name="Peterson J.D."/>
            <person name="Davidsen T.M."/>
            <person name="Zafar N."/>
            <person name="Zhou L."/>
            <person name="Radune D."/>
            <person name="Dimitrov G."/>
            <person name="Hance M."/>
            <person name="Tran K."/>
            <person name="Khouri H.M."/>
            <person name="Gill J."/>
            <person name="Utterback T.R."/>
            <person name="Feldblyum T.V."/>
            <person name="Wall J.D."/>
            <person name="Voordouw G."/>
            <person name="Fraser C.M."/>
        </authorList>
    </citation>
    <scope>NUCLEOTIDE SEQUENCE [LARGE SCALE GENOMIC DNA]</scope>
    <source>
        <strain>ATCC 29579 / DSM 644 / CCUG 34227 / NCIMB 8303 / VKM B-1760 / Hildenborough</strain>
    </source>
</reference>
<dbReference type="EC" id="2.5.1.55" evidence="1"/>
<dbReference type="EMBL" id="AE017285">
    <property type="protein sequence ID" value="AAS96102.1"/>
    <property type="molecule type" value="Genomic_DNA"/>
</dbReference>
<dbReference type="RefSeq" id="WP_010938915.1">
    <property type="nucleotide sequence ID" value="NC_002937.3"/>
</dbReference>
<dbReference type="RefSeq" id="YP_010843.1">
    <property type="nucleotide sequence ID" value="NC_002937.3"/>
</dbReference>
<dbReference type="SMR" id="P61654"/>
<dbReference type="STRING" id="882.DVU_1624"/>
<dbReference type="PaxDb" id="882-DVU_1624"/>
<dbReference type="EnsemblBacteria" id="AAS96102">
    <property type="protein sequence ID" value="AAS96102"/>
    <property type="gene ID" value="DVU_1624"/>
</dbReference>
<dbReference type="KEGG" id="dvu:DVU_1624"/>
<dbReference type="PATRIC" id="fig|882.5.peg.1499"/>
<dbReference type="eggNOG" id="COG2877">
    <property type="taxonomic scope" value="Bacteria"/>
</dbReference>
<dbReference type="HOGENOM" id="CLU_036666_0_0_7"/>
<dbReference type="OrthoDB" id="9802281at2"/>
<dbReference type="PhylomeDB" id="P61654"/>
<dbReference type="UniPathway" id="UPA00030"/>
<dbReference type="UniPathway" id="UPA00357">
    <property type="reaction ID" value="UER00474"/>
</dbReference>
<dbReference type="Proteomes" id="UP000002194">
    <property type="component" value="Chromosome"/>
</dbReference>
<dbReference type="GO" id="GO:0005737">
    <property type="term" value="C:cytoplasm"/>
    <property type="evidence" value="ECO:0007669"/>
    <property type="project" value="UniProtKB-SubCell"/>
</dbReference>
<dbReference type="GO" id="GO:0008676">
    <property type="term" value="F:3-deoxy-8-phosphooctulonate synthase activity"/>
    <property type="evidence" value="ECO:0007669"/>
    <property type="project" value="UniProtKB-UniRule"/>
</dbReference>
<dbReference type="GO" id="GO:0019294">
    <property type="term" value="P:keto-3-deoxy-D-manno-octulosonic acid biosynthetic process"/>
    <property type="evidence" value="ECO:0007669"/>
    <property type="project" value="UniProtKB-UniRule"/>
</dbReference>
<dbReference type="Gene3D" id="3.20.20.70">
    <property type="entry name" value="Aldolase class I"/>
    <property type="match status" value="1"/>
</dbReference>
<dbReference type="HAMAP" id="MF_00056">
    <property type="entry name" value="KDO8P_synth"/>
    <property type="match status" value="1"/>
</dbReference>
<dbReference type="InterPro" id="IPR013785">
    <property type="entry name" value="Aldolase_TIM"/>
</dbReference>
<dbReference type="InterPro" id="IPR006218">
    <property type="entry name" value="DAHP1/KDSA"/>
</dbReference>
<dbReference type="InterPro" id="IPR006269">
    <property type="entry name" value="KDO8P_synthase"/>
</dbReference>
<dbReference type="NCBIfam" id="TIGR01362">
    <property type="entry name" value="KDO8P_synth"/>
    <property type="match status" value="1"/>
</dbReference>
<dbReference type="NCBIfam" id="NF003543">
    <property type="entry name" value="PRK05198.1"/>
    <property type="match status" value="1"/>
</dbReference>
<dbReference type="PANTHER" id="PTHR21057">
    <property type="entry name" value="PHOSPHO-2-DEHYDRO-3-DEOXYHEPTONATE ALDOLASE"/>
    <property type="match status" value="1"/>
</dbReference>
<dbReference type="Pfam" id="PF00793">
    <property type="entry name" value="DAHP_synth_1"/>
    <property type="match status" value="1"/>
</dbReference>
<dbReference type="SUPFAM" id="SSF51569">
    <property type="entry name" value="Aldolase"/>
    <property type="match status" value="1"/>
</dbReference>
<keyword id="KW-0963">Cytoplasm</keyword>
<keyword id="KW-0448">Lipopolysaccharide biosynthesis</keyword>
<keyword id="KW-1185">Reference proteome</keyword>
<keyword id="KW-0808">Transferase</keyword>
<proteinExistence type="inferred from homology"/>
<feature type="chain" id="PRO_0000187123" description="2-dehydro-3-deoxyphosphooctonate aldolase">
    <location>
        <begin position="1"/>
        <end position="273"/>
    </location>
</feature>
<sequence length="273" mass="29338">MQHPTPDALHARLAARRFILAGPCALEDFDVAMETAHAVREAAEAAGLFAVFKSSWDKANRTSITSFRGPGLVRGMEWLARIREESGLPVVTDIHLPEQAAPVAEVADIIQIPAFLCRQTDLLVAAAATGRVVNVKKGQFVAPWDMRPAVEKLRAAGNERILLTERGASFGYNNLVVDYRSIPTMQGFGVPVVFDATHSVQLPGGLGGSSGGERRHVPVLARAAVAAGVDGVFLECHPDPDKALCDGPNSWPLDRLPALLKELSALWSLEHVC</sequence>
<evidence type="ECO:0000255" key="1">
    <source>
        <dbReference type="HAMAP-Rule" id="MF_00056"/>
    </source>
</evidence>
<organism>
    <name type="scientific">Nitratidesulfovibrio vulgaris (strain ATCC 29579 / DSM 644 / CCUG 34227 / NCIMB 8303 / VKM B-1760 / Hildenborough)</name>
    <name type="common">Desulfovibrio vulgaris</name>
    <dbReference type="NCBI Taxonomy" id="882"/>
    <lineage>
        <taxon>Bacteria</taxon>
        <taxon>Pseudomonadati</taxon>
        <taxon>Thermodesulfobacteriota</taxon>
        <taxon>Desulfovibrionia</taxon>
        <taxon>Desulfovibrionales</taxon>
        <taxon>Desulfovibrionaceae</taxon>
        <taxon>Nitratidesulfovibrio</taxon>
    </lineage>
</organism>
<gene>
    <name evidence="1" type="primary">kdsA</name>
    <name type="ordered locus">DVU_1624</name>
</gene>